<protein>
    <recommendedName>
        <fullName evidence="1">Small ribosomal subunit protein uS17</fullName>
    </recommendedName>
    <alternativeName>
        <fullName evidence="2">30S ribosomal protein S17</fullName>
    </alternativeName>
</protein>
<evidence type="ECO:0000255" key="1">
    <source>
        <dbReference type="HAMAP-Rule" id="MF_01345"/>
    </source>
</evidence>
<evidence type="ECO:0000305" key="2"/>
<feature type="chain" id="PRO_0000233618" description="Small ribosomal subunit protein uS17">
    <location>
        <begin position="1"/>
        <end position="89"/>
    </location>
</feature>
<dbReference type="EMBL" id="AE003849">
    <property type="protein sequence ID" value="AAF83971.1"/>
    <property type="molecule type" value="Genomic_DNA"/>
</dbReference>
<dbReference type="PIR" id="A82718">
    <property type="entry name" value="A82718"/>
</dbReference>
<dbReference type="SMR" id="Q9PE67"/>
<dbReference type="STRING" id="160492.XF_1161"/>
<dbReference type="KEGG" id="xfa:XF_1161"/>
<dbReference type="eggNOG" id="COG0186">
    <property type="taxonomic scope" value="Bacteria"/>
</dbReference>
<dbReference type="HOGENOM" id="CLU_073626_1_1_6"/>
<dbReference type="Proteomes" id="UP000000812">
    <property type="component" value="Chromosome"/>
</dbReference>
<dbReference type="GO" id="GO:0022627">
    <property type="term" value="C:cytosolic small ribosomal subunit"/>
    <property type="evidence" value="ECO:0007669"/>
    <property type="project" value="TreeGrafter"/>
</dbReference>
<dbReference type="GO" id="GO:0019843">
    <property type="term" value="F:rRNA binding"/>
    <property type="evidence" value="ECO:0007669"/>
    <property type="project" value="UniProtKB-UniRule"/>
</dbReference>
<dbReference type="GO" id="GO:0003735">
    <property type="term" value="F:structural constituent of ribosome"/>
    <property type="evidence" value="ECO:0007669"/>
    <property type="project" value="InterPro"/>
</dbReference>
<dbReference type="GO" id="GO:0006412">
    <property type="term" value="P:translation"/>
    <property type="evidence" value="ECO:0007669"/>
    <property type="project" value="UniProtKB-UniRule"/>
</dbReference>
<dbReference type="CDD" id="cd00364">
    <property type="entry name" value="Ribosomal_uS17"/>
    <property type="match status" value="1"/>
</dbReference>
<dbReference type="Gene3D" id="2.40.50.140">
    <property type="entry name" value="Nucleic acid-binding proteins"/>
    <property type="match status" value="1"/>
</dbReference>
<dbReference type="HAMAP" id="MF_01345_B">
    <property type="entry name" value="Ribosomal_uS17_B"/>
    <property type="match status" value="1"/>
</dbReference>
<dbReference type="InterPro" id="IPR012340">
    <property type="entry name" value="NA-bd_OB-fold"/>
</dbReference>
<dbReference type="InterPro" id="IPR000266">
    <property type="entry name" value="Ribosomal_uS17"/>
</dbReference>
<dbReference type="InterPro" id="IPR019984">
    <property type="entry name" value="Ribosomal_uS17_bact/chlr"/>
</dbReference>
<dbReference type="NCBIfam" id="NF004123">
    <property type="entry name" value="PRK05610.1"/>
    <property type="match status" value="1"/>
</dbReference>
<dbReference type="NCBIfam" id="TIGR03635">
    <property type="entry name" value="uS17_bact"/>
    <property type="match status" value="1"/>
</dbReference>
<dbReference type="PANTHER" id="PTHR10744">
    <property type="entry name" value="40S RIBOSOMAL PROTEIN S11 FAMILY MEMBER"/>
    <property type="match status" value="1"/>
</dbReference>
<dbReference type="PANTHER" id="PTHR10744:SF1">
    <property type="entry name" value="SMALL RIBOSOMAL SUBUNIT PROTEIN US17M"/>
    <property type="match status" value="1"/>
</dbReference>
<dbReference type="Pfam" id="PF00366">
    <property type="entry name" value="Ribosomal_S17"/>
    <property type="match status" value="1"/>
</dbReference>
<dbReference type="PRINTS" id="PR00973">
    <property type="entry name" value="RIBOSOMALS17"/>
</dbReference>
<dbReference type="SUPFAM" id="SSF50249">
    <property type="entry name" value="Nucleic acid-binding proteins"/>
    <property type="match status" value="1"/>
</dbReference>
<gene>
    <name evidence="1" type="primary">rpsQ</name>
    <name type="ordered locus">XF_1161</name>
</gene>
<organism>
    <name type="scientific">Xylella fastidiosa (strain 9a5c)</name>
    <dbReference type="NCBI Taxonomy" id="160492"/>
    <lineage>
        <taxon>Bacteria</taxon>
        <taxon>Pseudomonadati</taxon>
        <taxon>Pseudomonadota</taxon>
        <taxon>Gammaproteobacteria</taxon>
        <taxon>Lysobacterales</taxon>
        <taxon>Lysobacteraceae</taxon>
        <taxon>Xylella</taxon>
    </lineage>
</organism>
<proteinExistence type="inferred from homology"/>
<reference key="1">
    <citation type="journal article" date="2000" name="Nature">
        <title>The genome sequence of the plant pathogen Xylella fastidiosa.</title>
        <authorList>
            <person name="Simpson A.J.G."/>
            <person name="Reinach F.C."/>
            <person name="Arruda P."/>
            <person name="Abreu F.A."/>
            <person name="Acencio M."/>
            <person name="Alvarenga R."/>
            <person name="Alves L.M.C."/>
            <person name="Araya J.E."/>
            <person name="Baia G.S."/>
            <person name="Baptista C.S."/>
            <person name="Barros M.H."/>
            <person name="Bonaccorsi E.D."/>
            <person name="Bordin S."/>
            <person name="Bove J.M."/>
            <person name="Briones M.R.S."/>
            <person name="Bueno M.R.P."/>
            <person name="Camargo A.A."/>
            <person name="Camargo L.E.A."/>
            <person name="Carraro D.M."/>
            <person name="Carrer H."/>
            <person name="Colauto N.B."/>
            <person name="Colombo C."/>
            <person name="Costa F.F."/>
            <person name="Costa M.C.R."/>
            <person name="Costa-Neto C.M."/>
            <person name="Coutinho L.L."/>
            <person name="Cristofani M."/>
            <person name="Dias-Neto E."/>
            <person name="Docena C."/>
            <person name="El-Dorry H."/>
            <person name="Facincani A.P."/>
            <person name="Ferreira A.J.S."/>
            <person name="Ferreira V.C.A."/>
            <person name="Ferro J.A."/>
            <person name="Fraga J.S."/>
            <person name="Franca S.C."/>
            <person name="Franco M.C."/>
            <person name="Frohme M."/>
            <person name="Furlan L.R."/>
            <person name="Garnier M."/>
            <person name="Goldman G.H."/>
            <person name="Goldman M.H.S."/>
            <person name="Gomes S.L."/>
            <person name="Gruber A."/>
            <person name="Ho P.L."/>
            <person name="Hoheisel J.D."/>
            <person name="Junqueira M.L."/>
            <person name="Kemper E.L."/>
            <person name="Kitajima J.P."/>
            <person name="Krieger J.E."/>
            <person name="Kuramae E.E."/>
            <person name="Laigret F."/>
            <person name="Lambais M.R."/>
            <person name="Leite L.C.C."/>
            <person name="Lemos E.G.M."/>
            <person name="Lemos M.V.F."/>
            <person name="Lopes S.A."/>
            <person name="Lopes C.R."/>
            <person name="Machado J.A."/>
            <person name="Machado M.A."/>
            <person name="Madeira A.M.B.N."/>
            <person name="Madeira H.M.F."/>
            <person name="Marino C.L."/>
            <person name="Marques M.V."/>
            <person name="Martins E.A.L."/>
            <person name="Martins E.M.F."/>
            <person name="Matsukuma A.Y."/>
            <person name="Menck C.F.M."/>
            <person name="Miracca E.C."/>
            <person name="Miyaki C.Y."/>
            <person name="Monteiro-Vitorello C.B."/>
            <person name="Moon D.H."/>
            <person name="Nagai M.A."/>
            <person name="Nascimento A.L.T.O."/>
            <person name="Netto L.E.S."/>
            <person name="Nhani A. Jr."/>
            <person name="Nobrega F.G."/>
            <person name="Nunes L.R."/>
            <person name="Oliveira M.A."/>
            <person name="de Oliveira M.C."/>
            <person name="de Oliveira R.C."/>
            <person name="Palmieri D.A."/>
            <person name="Paris A."/>
            <person name="Peixoto B.R."/>
            <person name="Pereira G.A.G."/>
            <person name="Pereira H.A. Jr."/>
            <person name="Pesquero J.B."/>
            <person name="Quaggio R.B."/>
            <person name="Roberto P.G."/>
            <person name="Rodrigues V."/>
            <person name="de Rosa A.J.M."/>
            <person name="de Rosa V.E. Jr."/>
            <person name="de Sa R.G."/>
            <person name="Santelli R.V."/>
            <person name="Sawasaki H.E."/>
            <person name="da Silva A.C.R."/>
            <person name="da Silva A.M."/>
            <person name="da Silva F.R."/>
            <person name="Silva W.A. Jr."/>
            <person name="da Silveira J.F."/>
            <person name="Silvestri M.L.Z."/>
            <person name="Siqueira W.J."/>
            <person name="de Souza A.A."/>
            <person name="de Souza A.P."/>
            <person name="Terenzi M.F."/>
            <person name="Truffi D."/>
            <person name="Tsai S.M."/>
            <person name="Tsuhako M.H."/>
            <person name="Vallada H."/>
            <person name="Van Sluys M.A."/>
            <person name="Verjovski-Almeida S."/>
            <person name="Vettore A.L."/>
            <person name="Zago M.A."/>
            <person name="Zatz M."/>
            <person name="Meidanis J."/>
            <person name="Setubal J.C."/>
        </authorList>
    </citation>
    <scope>NUCLEOTIDE SEQUENCE [LARGE SCALE GENOMIC DNA]</scope>
    <source>
        <strain>9a5c</strain>
    </source>
</reference>
<keyword id="KW-0687">Ribonucleoprotein</keyword>
<keyword id="KW-0689">Ribosomal protein</keyword>
<keyword id="KW-0694">RNA-binding</keyword>
<keyword id="KW-0699">rRNA-binding</keyword>
<name>RS17_XYLFA</name>
<accession>Q9PE67</accession>
<comment type="function">
    <text evidence="1">One of the primary rRNA binding proteins, it binds specifically to the 5'-end of 16S ribosomal RNA.</text>
</comment>
<comment type="subunit">
    <text evidence="1">Part of the 30S ribosomal subunit.</text>
</comment>
<comment type="similarity">
    <text evidence="1">Belongs to the universal ribosomal protein uS17 family.</text>
</comment>
<sequence>MMNDHNERKPLRTIKGRVISNKMQKTVTVLVERQIKHALYGKYIKRSTKLHAHDADDLCNEGDVVLMTEVAPISKTKNWRVVEIVARSD</sequence>